<organism>
    <name type="scientific">Methanocaldococcus jannaschii (strain ATCC 43067 / DSM 2661 / JAL-1 / JCM 10045 / NBRC 100440)</name>
    <name type="common">Methanococcus jannaschii</name>
    <dbReference type="NCBI Taxonomy" id="243232"/>
    <lineage>
        <taxon>Archaea</taxon>
        <taxon>Methanobacteriati</taxon>
        <taxon>Methanobacteriota</taxon>
        <taxon>Methanomada group</taxon>
        <taxon>Methanococci</taxon>
        <taxon>Methanococcales</taxon>
        <taxon>Methanocaldococcaceae</taxon>
        <taxon>Methanocaldococcus</taxon>
    </lineage>
</organism>
<accession>Q57674</accession>
<name>AATK_METJA</name>
<evidence type="ECO:0000255" key="1"/>
<evidence type="ECO:0000269" key="2">
    <source>
    </source>
</evidence>
<evidence type="ECO:0000269" key="3">
    <source>
    </source>
</evidence>
<evidence type="ECO:0000303" key="4">
    <source>
    </source>
</evidence>
<evidence type="ECO:0000303" key="5">
    <source>
    </source>
</evidence>
<evidence type="ECO:0000305" key="6"/>
<evidence type="ECO:0000305" key="7">
    <source>
    </source>
</evidence>
<evidence type="ECO:0000305" key="8">
    <source>
    </source>
</evidence>
<keyword id="KW-0067">ATP-binding</keyword>
<keyword id="KW-1003">Cell membrane</keyword>
<keyword id="KW-0903">Direct protein sequencing</keyword>
<keyword id="KW-0375">Hydrogen ion transport</keyword>
<keyword id="KW-0378">Hydrolase</keyword>
<keyword id="KW-0406">Ion transport</keyword>
<keyword id="KW-0446">Lipid-binding</keyword>
<keyword id="KW-0472">Membrane</keyword>
<keyword id="KW-0547">Nucleotide-binding</keyword>
<keyword id="KW-1185">Reference proteome</keyword>
<keyword id="KW-0812">Transmembrane</keyword>
<keyword id="KW-1133">Transmembrane helix</keyword>
<keyword id="KW-0813">Transport</keyword>
<comment type="function">
    <text evidence="7">Component of the A-type ATP synthase that produces ATP from ADP in the presence of a proton gradient across the membrane.</text>
</comment>
<comment type="biophysicochemical properties">
    <phDependence>
        <text evidence="2">Optimum pH is 6.0 for ATP hydrolysis.</text>
    </phDependence>
    <temperatureDependence>
        <text evidence="2">Optimum temperature is 80 degrees Celsius.</text>
    </temperatureDependence>
</comment>
<comment type="subunit">
    <text evidence="2 3">The A-type ATPase is composed of subunits A(3), B(3), C, D, E(1 or 2), F, H(2), I and K(x) (PubMed:12768457, PubMed:15220347). Subunit K dimerizes and may form higher oligomers (PubMed:12768457).</text>
</comment>
<comment type="subcellular location">
    <subcellularLocation>
        <location evidence="2 3">Cell membrane</location>
        <topology evidence="7 8">Multi-pass membrane protein</topology>
    </subcellularLocation>
</comment>
<comment type="domain">
    <text evidence="2 3">Purified ATP synthase is 25.9 nm long. The hydrophilic A1 domain is 9.4 X 11.5 nm, the central stalk is 8.0 X 3.9 nm and the membrane-bound A0 domain is 6.4 X 10.6 nm; the domains are connected by two stalks. ATP is synthesized or hydrolyzed by the A1 domain while ion translocation occurs via the A0 domain.</text>
</comment>
<comment type="similarity">
    <text evidence="6">Belongs to the V-ATPase proteolipid subunit family.</text>
</comment>
<proteinExistence type="evidence at protein level"/>
<feature type="initiator methionine" description="Removed" evidence="2">
    <location>
        <position position="1"/>
    </location>
</feature>
<feature type="chain" id="PRO_0000071731" description="A-type ATP synthase subunit K">
    <location>
        <begin position="2"/>
        <end position="220"/>
    </location>
</feature>
<feature type="transmembrane region" description="Helical" evidence="1">
    <location>
        <begin position="5"/>
        <end position="25"/>
    </location>
</feature>
<feature type="transmembrane region" description="Helical" evidence="1">
    <location>
        <begin position="63"/>
        <end position="83"/>
    </location>
</feature>
<feature type="transmembrane region" description="Helical" evidence="1">
    <location>
        <begin position="90"/>
        <end position="110"/>
    </location>
</feature>
<feature type="transmembrane region" description="Helical" evidence="1">
    <location>
        <begin position="125"/>
        <end position="145"/>
    </location>
</feature>
<feature type="transmembrane region" description="Helical" evidence="1">
    <location>
        <begin position="155"/>
        <end position="175"/>
    </location>
</feature>
<feature type="transmembrane region" description="Helical" evidence="1">
    <location>
        <begin position="195"/>
        <end position="215"/>
    </location>
</feature>
<dbReference type="EMBL" id="L77117">
    <property type="protein sequence ID" value="AAB98207.1"/>
    <property type="molecule type" value="Genomic_DNA"/>
</dbReference>
<dbReference type="PIR" id="F64327">
    <property type="entry name" value="F64327"/>
</dbReference>
<dbReference type="RefSeq" id="WP_010869717.1">
    <property type="nucleotide sequence ID" value="NC_000909.1"/>
</dbReference>
<dbReference type="SMR" id="Q57674"/>
<dbReference type="FunCoup" id="Q57674">
    <property type="interactions" value="25"/>
</dbReference>
<dbReference type="STRING" id="243232.MJ_0221"/>
<dbReference type="PaxDb" id="243232-MJ_0221"/>
<dbReference type="EnsemblBacteria" id="AAB98207">
    <property type="protein sequence ID" value="AAB98207"/>
    <property type="gene ID" value="MJ_0221"/>
</dbReference>
<dbReference type="GeneID" id="1451071"/>
<dbReference type="KEGG" id="mja:MJ_0221"/>
<dbReference type="eggNOG" id="arCOG02455">
    <property type="taxonomic scope" value="Archaea"/>
</dbReference>
<dbReference type="HOGENOM" id="CLU_1237912_0_0_2"/>
<dbReference type="InParanoid" id="Q57674"/>
<dbReference type="OrthoDB" id="66135at2157"/>
<dbReference type="Proteomes" id="UP000000805">
    <property type="component" value="Chromosome"/>
</dbReference>
<dbReference type="GO" id="GO:0016020">
    <property type="term" value="C:membrane"/>
    <property type="evidence" value="ECO:0000318"/>
    <property type="project" value="GO_Central"/>
</dbReference>
<dbReference type="GO" id="GO:0005886">
    <property type="term" value="C:plasma membrane"/>
    <property type="evidence" value="ECO:0007669"/>
    <property type="project" value="UniProtKB-SubCell"/>
</dbReference>
<dbReference type="GO" id="GO:0033179">
    <property type="term" value="C:proton-transporting V-type ATPase, V0 domain"/>
    <property type="evidence" value="ECO:0007669"/>
    <property type="project" value="InterPro"/>
</dbReference>
<dbReference type="GO" id="GO:0005524">
    <property type="term" value="F:ATP binding"/>
    <property type="evidence" value="ECO:0007669"/>
    <property type="project" value="UniProtKB-KW"/>
</dbReference>
<dbReference type="GO" id="GO:0016787">
    <property type="term" value="F:hydrolase activity"/>
    <property type="evidence" value="ECO:0007669"/>
    <property type="project" value="UniProtKB-KW"/>
</dbReference>
<dbReference type="GO" id="GO:0008289">
    <property type="term" value="F:lipid binding"/>
    <property type="evidence" value="ECO:0007669"/>
    <property type="project" value="UniProtKB-KW"/>
</dbReference>
<dbReference type="GO" id="GO:0046961">
    <property type="term" value="F:proton-transporting ATPase activity, rotational mechanism"/>
    <property type="evidence" value="ECO:0007669"/>
    <property type="project" value="InterPro"/>
</dbReference>
<dbReference type="CDD" id="cd18179">
    <property type="entry name" value="ATP-synt_Vo_Ao_c_NTPK_rpt1"/>
    <property type="match status" value="1"/>
</dbReference>
<dbReference type="CDD" id="cd18180">
    <property type="entry name" value="ATP-synt_Vo_Ao_c_NTPK_rpt2"/>
    <property type="match status" value="2"/>
</dbReference>
<dbReference type="Gene3D" id="1.20.20.10">
    <property type="entry name" value="F1F0 ATP synthase subunit C"/>
    <property type="match status" value="1"/>
</dbReference>
<dbReference type="Gene3D" id="1.20.120.610">
    <property type="entry name" value="lithium bound rotor ring of v- atpase"/>
    <property type="match status" value="1"/>
</dbReference>
<dbReference type="InterPro" id="IPR038662">
    <property type="entry name" value="ATP_synth_F0_csu_sf"/>
</dbReference>
<dbReference type="InterPro" id="IPR002379">
    <property type="entry name" value="ATPase_proteolipid_c-like_dom"/>
</dbReference>
<dbReference type="InterPro" id="IPR000245">
    <property type="entry name" value="ATPase_proteolipid_csu"/>
</dbReference>
<dbReference type="InterPro" id="IPR035921">
    <property type="entry name" value="F/V-ATP_Csub_sf"/>
</dbReference>
<dbReference type="NCBIfam" id="NF004913">
    <property type="entry name" value="PRK06271.1"/>
    <property type="match status" value="1"/>
</dbReference>
<dbReference type="PANTHER" id="PTHR10263">
    <property type="entry name" value="V-TYPE PROTON ATPASE PROTEOLIPID SUBUNIT"/>
    <property type="match status" value="1"/>
</dbReference>
<dbReference type="Pfam" id="PF00137">
    <property type="entry name" value="ATP-synt_C"/>
    <property type="match status" value="3"/>
</dbReference>
<dbReference type="PRINTS" id="PR00122">
    <property type="entry name" value="VACATPASE"/>
</dbReference>
<dbReference type="SUPFAM" id="SSF81333">
    <property type="entry name" value="F1F0 ATP synthase subunit C"/>
    <property type="match status" value="3"/>
</dbReference>
<reference key="1">
    <citation type="journal article" date="1996" name="Science">
        <title>Complete genome sequence of the methanogenic archaeon, Methanococcus jannaschii.</title>
        <authorList>
            <person name="Bult C.J."/>
            <person name="White O."/>
            <person name="Olsen G.J."/>
            <person name="Zhou L."/>
            <person name="Fleischmann R.D."/>
            <person name="Sutton G.G."/>
            <person name="Blake J.A."/>
            <person name="FitzGerald L.M."/>
            <person name="Clayton R.A."/>
            <person name="Gocayne J.D."/>
            <person name="Kerlavage A.R."/>
            <person name="Dougherty B.A."/>
            <person name="Tomb J.-F."/>
            <person name="Adams M.D."/>
            <person name="Reich C.I."/>
            <person name="Overbeek R."/>
            <person name="Kirkness E.F."/>
            <person name="Weinstock K.G."/>
            <person name="Merrick J.M."/>
            <person name="Glodek A."/>
            <person name="Scott J.L."/>
            <person name="Geoghagen N.S.M."/>
            <person name="Weidman J.F."/>
            <person name="Fuhrmann J.L."/>
            <person name="Nguyen D."/>
            <person name="Utterback T.R."/>
            <person name="Kelley J.M."/>
            <person name="Peterson J.D."/>
            <person name="Sadow P.W."/>
            <person name="Hanna M.C."/>
            <person name="Cotton M.D."/>
            <person name="Roberts K.M."/>
            <person name="Hurst M.A."/>
            <person name="Kaine B.P."/>
            <person name="Borodovsky M."/>
            <person name="Klenk H.-P."/>
            <person name="Fraser C.M."/>
            <person name="Smith H.O."/>
            <person name="Woese C.R."/>
            <person name="Venter J.C."/>
        </authorList>
    </citation>
    <scope>NUCLEOTIDE SEQUENCE [LARGE SCALE GENOMIC DNA]</scope>
    <source>
        <strain>ATCC 43067 / DSM 2661 / JAL-1 / JCM 10045 / NBRC 100440</strain>
    </source>
</reference>
<reference key="2">
    <citation type="journal article" date="2003" name="Extremophiles">
        <title>Isolation of a complete A1AO ATP synthase comprising nine subunits from the hyperthermophile Methanococcus jannaschii.</title>
        <authorList>
            <person name="Lingl A."/>
            <person name="Huber H."/>
            <person name="Stetter K.O."/>
            <person name="Mayer F."/>
            <person name="Kellermann J."/>
            <person name="Mueller V."/>
        </authorList>
    </citation>
    <scope>PROTEIN SEQUENCE OF 2-8</scope>
    <scope>FUNCTION</scope>
    <scope>BIOPHYSICOCHEMICAL PROPERTIES</scope>
    <scope>SUBUNIT</scope>
    <scope>SUBCELLULAR LOCATION</scope>
    <scope>DOMAIN</scope>
    <source>
        <strain>ATCC 43067 / DSM 2661 / JAL-1 / JCM 10045 / NBRC 100440</strain>
    </source>
</reference>
<reference key="3">
    <citation type="journal article" date="2004" name="J. Biol. Chem.">
        <title>Structure and subunit arrangement of the A-type ATP synthase complex from the archaeon Methanococcus jannaschii visualized by electron microscopy.</title>
        <authorList>
            <person name="Coskun U."/>
            <person name="Chaban Y.L."/>
            <person name="Lingl A."/>
            <person name="Mueller V."/>
            <person name="Keegstra W."/>
            <person name="Boekema E.J."/>
            <person name="Grueber G."/>
        </authorList>
    </citation>
    <scope>STRUCTURE BY ELECTRON MICROSCOPY (18 ANGSTROMS) OF A-TYPE ATP SYNTHASE</scope>
    <scope>SUBUNIT</scope>
    <scope>SUBCELLULAR LOCATION</scope>
    <scope>DOMAIN</scope>
    <source>
        <strain>ATCC 43067 / DSM 2661 / JAL-1 / JCM 10045 / NBRC 100440</strain>
    </source>
</reference>
<protein>
    <recommendedName>
        <fullName evidence="6">A-type ATP synthase subunit K</fullName>
    </recommendedName>
    <alternativeName>
        <fullName evidence="4">A1A0-type ATP synthase subunit K</fullName>
    </alternativeName>
    <alternativeName>
        <fullName evidence="4">ATPase proteolipid subunit</fullName>
    </alternativeName>
</protein>
<sequence length="220" mass="21332">MVDPLILGAVGAGLAVGIAGLGSGIGAGITGASGAGVVAEDPNKFGTAIVFQALPQTQGLYGFLVAILILFVFKTVSPWAMFAAGLAAGLAGLSAIGQGIAASAGLGAVAEDNSIFGKAMVFSVLPETQAIYGLLIAILLLVGVFKGNAGAETVAALGAGFAVGFAGLSGIGQGITAAGAIGATARDPDAMGKGLVLAVMPETFAIFGLLIAILIMLMIK</sequence>
<gene>
    <name evidence="5" type="primary">atpK</name>
    <name type="ordered locus">MJ0221</name>
</gene>